<evidence type="ECO:0000255" key="1">
    <source>
        <dbReference type="HAMAP-Rule" id="MF_01315"/>
    </source>
</evidence>
<evidence type="ECO:0000256" key="2">
    <source>
        <dbReference type="SAM" id="MobiDB-lite"/>
    </source>
</evidence>
<evidence type="ECO:0000305" key="3"/>
<comment type="function">
    <text evidence="1">Located at the top of the head of the 30S subunit, it contacts several helices of the 16S rRNA. In the 70S ribosome it contacts the 23S rRNA (bridge B1a) and protein L5 of the 50S subunit (bridge B1b), connecting the 2 subunits; these bridges are implicated in subunit movement. Contacts the tRNAs in the A and P-sites.</text>
</comment>
<comment type="subunit">
    <text evidence="1">Part of the 30S ribosomal subunit. Forms a loose heterodimer with protein S19. Forms two bridges to the 50S subunit in the 70S ribosome.</text>
</comment>
<comment type="similarity">
    <text evidence="1">Belongs to the universal ribosomal protein uS13 family.</text>
</comment>
<name>RS13_CORK4</name>
<organism>
    <name type="scientific">Corynebacterium kroppenstedtii (strain DSM 44385 / JCM 11950 / CIP 105744 / CCUG 35717)</name>
    <dbReference type="NCBI Taxonomy" id="645127"/>
    <lineage>
        <taxon>Bacteria</taxon>
        <taxon>Bacillati</taxon>
        <taxon>Actinomycetota</taxon>
        <taxon>Actinomycetes</taxon>
        <taxon>Mycobacteriales</taxon>
        <taxon>Corynebacteriaceae</taxon>
        <taxon>Corynebacterium</taxon>
    </lineage>
</organism>
<keyword id="KW-1185">Reference proteome</keyword>
<keyword id="KW-0687">Ribonucleoprotein</keyword>
<keyword id="KW-0689">Ribosomal protein</keyword>
<keyword id="KW-0694">RNA-binding</keyword>
<keyword id="KW-0699">rRNA-binding</keyword>
<keyword id="KW-0820">tRNA-binding</keyword>
<protein>
    <recommendedName>
        <fullName evidence="1">Small ribosomal subunit protein uS13</fullName>
    </recommendedName>
    <alternativeName>
        <fullName evidence="3">30S ribosomal protein S13</fullName>
    </alternativeName>
</protein>
<accession>C4LKZ4</accession>
<gene>
    <name evidence="1" type="primary">rpsM</name>
    <name type="ordered locus">ckrop_1778</name>
</gene>
<feature type="chain" id="PRO_1000214386" description="Small ribosomal subunit protein uS13">
    <location>
        <begin position="1"/>
        <end position="122"/>
    </location>
</feature>
<feature type="region of interest" description="Disordered" evidence="2">
    <location>
        <begin position="93"/>
        <end position="122"/>
    </location>
</feature>
<sequence length="122" mass="13784">MARLAGVDLPRNKRMEVALTYIYGIGPTSAKQLLEKTEISPDLRTDALTDDQVAKLRDAIEAEYTVEGDLRRQVQADIRRKIEIGSYQGLRHRRGLPVRGQRTKTNARTRKGPKKTIAGKKK</sequence>
<dbReference type="EMBL" id="CP001620">
    <property type="protein sequence ID" value="ACR18499.1"/>
    <property type="molecule type" value="Genomic_DNA"/>
</dbReference>
<dbReference type="RefSeq" id="WP_012732386.1">
    <property type="nucleotide sequence ID" value="NC_012704.1"/>
</dbReference>
<dbReference type="SMR" id="C4LKZ4"/>
<dbReference type="STRING" id="645127.ckrop_1778"/>
<dbReference type="GeneID" id="92726581"/>
<dbReference type="KEGG" id="ckp:ckrop_1778"/>
<dbReference type="eggNOG" id="COG0099">
    <property type="taxonomic scope" value="Bacteria"/>
</dbReference>
<dbReference type="HOGENOM" id="CLU_103849_1_2_11"/>
<dbReference type="OrthoDB" id="9803610at2"/>
<dbReference type="Proteomes" id="UP000001473">
    <property type="component" value="Chromosome"/>
</dbReference>
<dbReference type="GO" id="GO:0005829">
    <property type="term" value="C:cytosol"/>
    <property type="evidence" value="ECO:0007669"/>
    <property type="project" value="TreeGrafter"/>
</dbReference>
<dbReference type="GO" id="GO:0015935">
    <property type="term" value="C:small ribosomal subunit"/>
    <property type="evidence" value="ECO:0007669"/>
    <property type="project" value="TreeGrafter"/>
</dbReference>
<dbReference type="GO" id="GO:0019843">
    <property type="term" value="F:rRNA binding"/>
    <property type="evidence" value="ECO:0007669"/>
    <property type="project" value="UniProtKB-UniRule"/>
</dbReference>
<dbReference type="GO" id="GO:0003735">
    <property type="term" value="F:structural constituent of ribosome"/>
    <property type="evidence" value="ECO:0007669"/>
    <property type="project" value="InterPro"/>
</dbReference>
<dbReference type="GO" id="GO:0000049">
    <property type="term" value="F:tRNA binding"/>
    <property type="evidence" value="ECO:0007669"/>
    <property type="project" value="UniProtKB-UniRule"/>
</dbReference>
<dbReference type="GO" id="GO:0006412">
    <property type="term" value="P:translation"/>
    <property type="evidence" value="ECO:0007669"/>
    <property type="project" value="UniProtKB-UniRule"/>
</dbReference>
<dbReference type="FunFam" id="1.10.8.50:FF:000001">
    <property type="entry name" value="30S ribosomal protein S13"/>
    <property type="match status" value="1"/>
</dbReference>
<dbReference type="FunFam" id="4.10.910.10:FF:000001">
    <property type="entry name" value="30S ribosomal protein S13"/>
    <property type="match status" value="1"/>
</dbReference>
<dbReference type="Gene3D" id="1.10.8.50">
    <property type="match status" value="1"/>
</dbReference>
<dbReference type="Gene3D" id="4.10.910.10">
    <property type="entry name" value="30s ribosomal protein s13, domain 2"/>
    <property type="match status" value="1"/>
</dbReference>
<dbReference type="HAMAP" id="MF_01315">
    <property type="entry name" value="Ribosomal_uS13"/>
    <property type="match status" value="1"/>
</dbReference>
<dbReference type="InterPro" id="IPR027437">
    <property type="entry name" value="Rbsml_uS13_C"/>
</dbReference>
<dbReference type="InterPro" id="IPR001892">
    <property type="entry name" value="Ribosomal_uS13"/>
</dbReference>
<dbReference type="InterPro" id="IPR010979">
    <property type="entry name" value="Ribosomal_uS13-like_H2TH"/>
</dbReference>
<dbReference type="InterPro" id="IPR019980">
    <property type="entry name" value="Ribosomal_uS13_bac-type"/>
</dbReference>
<dbReference type="InterPro" id="IPR018269">
    <property type="entry name" value="Ribosomal_uS13_CS"/>
</dbReference>
<dbReference type="NCBIfam" id="TIGR03631">
    <property type="entry name" value="uS13_bact"/>
    <property type="match status" value="1"/>
</dbReference>
<dbReference type="PANTHER" id="PTHR10871">
    <property type="entry name" value="30S RIBOSOMAL PROTEIN S13/40S RIBOSOMAL PROTEIN S18"/>
    <property type="match status" value="1"/>
</dbReference>
<dbReference type="PANTHER" id="PTHR10871:SF1">
    <property type="entry name" value="SMALL RIBOSOMAL SUBUNIT PROTEIN US13M"/>
    <property type="match status" value="1"/>
</dbReference>
<dbReference type="Pfam" id="PF00416">
    <property type="entry name" value="Ribosomal_S13"/>
    <property type="match status" value="1"/>
</dbReference>
<dbReference type="PIRSF" id="PIRSF002134">
    <property type="entry name" value="Ribosomal_S13"/>
    <property type="match status" value="1"/>
</dbReference>
<dbReference type="SUPFAM" id="SSF46946">
    <property type="entry name" value="S13-like H2TH domain"/>
    <property type="match status" value="1"/>
</dbReference>
<dbReference type="PROSITE" id="PS00646">
    <property type="entry name" value="RIBOSOMAL_S13_1"/>
    <property type="match status" value="1"/>
</dbReference>
<dbReference type="PROSITE" id="PS50159">
    <property type="entry name" value="RIBOSOMAL_S13_2"/>
    <property type="match status" value="1"/>
</dbReference>
<proteinExistence type="inferred from homology"/>
<reference key="1">
    <citation type="journal article" date="2008" name="J. Biotechnol.">
        <title>Ultrafast pyrosequencing of Corynebacterium kroppenstedtii DSM44385 revealed insights into the physiology of a lipophilic corynebacterium that lacks mycolic acids.</title>
        <authorList>
            <person name="Tauch A."/>
            <person name="Schneider J."/>
            <person name="Szczepanowski R."/>
            <person name="Tilker A."/>
            <person name="Viehoever P."/>
            <person name="Gartemann K.-H."/>
            <person name="Arnold W."/>
            <person name="Blom J."/>
            <person name="Brinkrolf K."/>
            <person name="Brune I."/>
            <person name="Goetker S."/>
            <person name="Weisshaar B."/>
            <person name="Goesmann A."/>
            <person name="Droege M."/>
            <person name="Puehler A."/>
        </authorList>
    </citation>
    <scope>NUCLEOTIDE SEQUENCE [LARGE SCALE GENOMIC DNA]</scope>
    <source>
        <strain>DSM 44385 / JCM 11950 / CIP 105744 / CCUG 35717</strain>
    </source>
</reference>